<feature type="chain" id="PRO_0000444693" description="Uncharacterized protein CXorf51A">
    <location>
        <begin position="1"/>
        <end position="108"/>
    </location>
</feature>
<feature type="region of interest" description="Disordered" evidence="1">
    <location>
        <begin position="1"/>
        <end position="108"/>
    </location>
</feature>
<feature type="compositionally biased region" description="Basic residues" evidence="1">
    <location>
        <begin position="26"/>
        <end position="56"/>
    </location>
</feature>
<feature type="compositionally biased region" description="Polar residues" evidence="1">
    <location>
        <begin position="58"/>
        <end position="70"/>
    </location>
</feature>
<feature type="compositionally biased region" description="Basic residues" evidence="1">
    <location>
        <begin position="73"/>
        <end position="92"/>
    </location>
</feature>
<feature type="compositionally biased region" description="Basic and acidic residues" evidence="1">
    <location>
        <begin position="93"/>
        <end position="108"/>
    </location>
</feature>
<evidence type="ECO:0000256" key="1">
    <source>
        <dbReference type="SAM" id="MobiDB-lite"/>
    </source>
</evidence>
<evidence type="ECO:0000305" key="2"/>
<evidence type="ECO:0000312" key="3">
    <source>
        <dbReference type="HGNC" id="HGNC:30533"/>
    </source>
</evidence>
<protein>
    <recommendedName>
        <fullName evidence="2">Uncharacterized protein CXorf51A</fullName>
    </recommendedName>
</protein>
<organism>
    <name type="scientific">Homo sapiens</name>
    <name type="common">Human</name>
    <dbReference type="NCBI Taxonomy" id="9606"/>
    <lineage>
        <taxon>Eukaryota</taxon>
        <taxon>Metazoa</taxon>
        <taxon>Chordata</taxon>
        <taxon>Craniata</taxon>
        <taxon>Vertebrata</taxon>
        <taxon>Euteleostomi</taxon>
        <taxon>Mammalia</taxon>
        <taxon>Eutheria</taxon>
        <taxon>Euarchontoglires</taxon>
        <taxon>Primates</taxon>
        <taxon>Haplorrhini</taxon>
        <taxon>Catarrhini</taxon>
        <taxon>Hominidae</taxon>
        <taxon>Homo</taxon>
    </lineage>
</organism>
<sequence length="108" mass="12028">MAKVTSEPQKPNEDVDEQTPSTSSTKGRKKGKTPRQRRSRSGVKGLKTTRKAKRPLRGSSSQKAGETNTPAGKPKKARGPILRGRYHRLKEKMKKEEADKEQSETSVL</sequence>
<proteinExistence type="predicted"/>
<dbReference type="EMBL" id="AL109836">
    <property type="status" value="NOT_ANNOTATED_CDS"/>
    <property type="molecule type" value="Genomic_DNA"/>
</dbReference>
<dbReference type="CCDS" id="CCDS83498.1"/>
<dbReference type="RefSeq" id="NP_001137536.1">
    <property type="nucleotide sequence ID" value="NM_001144064.3"/>
</dbReference>
<dbReference type="RefSeq" id="NP_001231821.1">
    <property type="nucleotide sequence ID" value="NM_001244892.1"/>
</dbReference>
<dbReference type="BMRB" id="A0A1B0GTR3"/>
<dbReference type="SMR" id="A0A1B0GTR3"/>
<dbReference type="STRING" id="9606.ENSP00000489806"/>
<dbReference type="iPTMnet" id="A0A1B0GTR3"/>
<dbReference type="PhosphoSitePlus" id="A0A1B0GTR3"/>
<dbReference type="BioMuta" id="CXorf51A"/>
<dbReference type="jPOST" id="A0A1B0GTR3"/>
<dbReference type="MassIVE" id="A0A1B0GTR3"/>
<dbReference type="DNASU" id="100129239"/>
<dbReference type="Ensembl" id="ENST00000458472.2">
    <property type="protein sequence ID" value="ENSP00000489806.1"/>
    <property type="gene ID" value="ENSG00000224440.2"/>
</dbReference>
<dbReference type="GeneID" id="100129239"/>
<dbReference type="GeneID" id="100133053"/>
<dbReference type="KEGG" id="hsa:100129239"/>
<dbReference type="KEGG" id="hsa:100133053"/>
<dbReference type="MANE-Select" id="ENST00000458472.2">
    <property type="protein sequence ID" value="ENSP00000489806.1"/>
    <property type="RefSeq nucleotide sequence ID" value="NM_001144064.3"/>
    <property type="RefSeq protein sequence ID" value="NP_001137536.1"/>
</dbReference>
<dbReference type="AGR" id="HGNC:30533"/>
<dbReference type="AGR" id="HGNC:42787"/>
<dbReference type="CTD" id="100129239"/>
<dbReference type="CTD" id="100133053"/>
<dbReference type="GeneCards" id="CXorf51A"/>
<dbReference type="HGNC" id="HGNC:30533">
    <property type="gene designation" value="CXorf51A"/>
</dbReference>
<dbReference type="HPA" id="ENSG00000224440">
    <property type="expression patterns" value="Tissue enriched (testis)"/>
</dbReference>
<dbReference type="neXtProt" id="NX_A0A1B0GTR3"/>
<dbReference type="OpenTargets" id="ENSG00000224440"/>
<dbReference type="OpenTargets" id="ENSG00000235699"/>
<dbReference type="VEuPathDB" id="HostDB:ENSG00000224440"/>
<dbReference type="InParanoid" id="A0A1B0GTR3"/>
<dbReference type="OrthoDB" id="9538572at2759"/>
<dbReference type="PAN-GO" id="A0A1B0GTR3">
    <property type="GO annotations" value="0 GO annotations based on evolutionary models"/>
</dbReference>
<dbReference type="PathwayCommons" id="A0A1B0GTR3"/>
<dbReference type="SignaLink" id="A0A1B0GTR3"/>
<dbReference type="BioGRID-ORCS" id="100129239">
    <property type="hits" value="8 hits in 206 CRISPR screens"/>
</dbReference>
<dbReference type="BioGRID-ORCS" id="100133053">
    <property type="hits" value="3 hits in 187 CRISPR screens"/>
</dbReference>
<dbReference type="Pharos" id="A0A1B0GTR3">
    <property type="development level" value="Tdark"/>
</dbReference>
<dbReference type="PRO" id="PR:A0A1B0GTR3"/>
<dbReference type="Proteomes" id="UP000005640">
    <property type="component" value="Chromosome X"/>
</dbReference>
<dbReference type="RNAct" id="A0A1B0GTR3">
    <property type="molecule type" value="protein"/>
</dbReference>
<dbReference type="Bgee" id="ENSG00000224440">
    <property type="expression patterns" value="Expressed in male germ line stem cell (sensu Vertebrata) in testis and 31 other cell types or tissues"/>
</dbReference>
<dbReference type="InterPro" id="IPR040433">
    <property type="entry name" value="Spermatid_TP"/>
</dbReference>
<dbReference type="PANTHER" id="PTHR37876">
    <property type="entry name" value="PROTEIN GAR2-LIKE"/>
    <property type="match status" value="1"/>
</dbReference>
<dbReference type="PANTHER" id="PTHR37876:SF1">
    <property type="entry name" value="SERINE_ARGININE REPETITIVE MATRIX PROTEIN 4-LIKE-RELATED"/>
    <property type="match status" value="1"/>
</dbReference>
<accession>A0A1B0GTR3</accession>
<name>CX05A_HUMAN</name>
<keyword id="KW-1185">Reference proteome</keyword>
<reference key="1">
    <citation type="journal article" date="2005" name="Nature">
        <title>The DNA sequence of the human X chromosome.</title>
        <authorList>
            <person name="Ross M.T."/>
            <person name="Grafham D.V."/>
            <person name="Coffey A.J."/>
            <person name="Scherer S."/>
            <person name="McLay K."/>
            <person name="Muzny D."/>
            <person name="Platzer M."/>
            <person name="Howell G.R."/>
            <person name="Burrows C."/>
            <person name="Bird C.P."/>
            <person name="Frankish A."/>
            <person name="Lovell F.L."/>
            <person name="Howe K.L."/>
            <person name="Ashurst J.L."/>
            <person name="Fulton R.S."/>
            <person name="Sudbrak R."/>
            <person name="Wen G."/>
            <person name="Jones M.C."/>
            <person name="Hurles M.E."/>
            <person name="Andrews T.D."/>
            <person name="Scott C.E."/>
            <person name="Searle S."/>
            <person name="Ramser J."/>
            <person name="Whittaker A."/>
            <person name="Deadman R."/>
            <person name="Carter N.P."/>
            <person name="Hunt S.E."/>
            <person name="Chen R."/>
            <person name="Cree A."/>
            <person name="Gunaratne P."/>
            <person name="Havlak P."/>
            <person name="Hodgson A."/>
            <person name="Metzker M.L."/>
            <person name="Richards S."/>
            <person name="Scott G."/>
            <person name="Steffen D."/>
            <person name="Sodergren E."/>
            <person name="Wheeler D.A."/>
            <person name="Worley K.C."/>
            <person name="Ainscough R."/>
            <person name="Ambrose K.D."/>
            <person name="Ansari-Lari M.A."/>
            <person name="Aradhya S."/>
            <person name="Ashwell R.I."/>
            <person name="Babbage A.K."/>
            <person name="Bagguley C.L."/>
            <person name="Ballabio A."/>
            <person name="Banerjee R."/>
            <person name="Barker G.E."/>
            <person name="Barlow K.F."/>
            <person name="Barrett I.P."/>
            <person name="Bates K.N."/>
            <person name="Beare D.M."/>
            <person name="Beasley H."/>
            <person name="Beasley O."/>
            <person name="Beck A."/>
            <person name="Bethel G."/>
            <person name="Blechschmidt K."/>
            <person name="Brady N."/>
            <person name="Bray-Allen S."/>
            <person name="Bridgeman A.M."/>
            <person name="Brown A.J."/>
            <person name="Brown M.J."/>
            <person name="Bonnin D."/>
            <person name="Bruford E.A."/>
            <person name="Buhay C."/>
            <person name="Burch P."/>
            <person name="Burford D."/>
            <person name="Burgess J."/>
            <person name="Burrill W."/>
            <person name="Burton J."/>
            <person name="Bye J.M."/>
            <person name="Carder C."/>
            <person name="Carrel L."/>
            <person name="Chako J."/>
            <person name="Chapman J.C."/>
            <person name="Chavez D."/>
            <person name="Chen E."/>
            <person name="Chen G."/>
            <person name="Chen Y."/>
            <person name="Chen Z."/>
            <person name="Chinault C."/>
            <person name="Ciccodicola A."/>
            <person name="Clark S.Y."/>
            <person name="Clarke G."/>
            <person name="Clee C.M."/>
            <person name="Clegg S."/>
            <person name="Clerc-Blankenburg K."/>
            <person name="Clifford K."/>
            <person name="Cobley V."/>
            <person name="Cole C.G."/>
            <person name="Conquer J.S."/>
            <person name="Corby N."/>
            <person name="Connor R.E."/>
            <person name="David R."/>
            <person name="Davies J."/>
            <person name="Davis C."/>
            <person name="Davis J."/>
            <person name="Delgado O."/>
            <person name="Deshazo D."/>
            <person name="Dhami P."/>
            <person name="Ding Y."/>
            <person name="Dinh H."/>
            <person name="Dodsworth S."/>
            <person name="Draper H."/>
            <person name="Dugan-Rocha S."/>
            <person name="Dunham A."/>
            <person name="Dunn M."/>
            <person name="Durbin K.J."/>
            <person name="Dutta I."/>
            <person name="Eades T."/>
            <person name="Ellwood M."/>
            <person name="Emery-Cohen A."/>
            <person name="Errington H."/>
            <person name="Evans K.L."/>
            <person name="Faulkner L."/>
            <person name="Francis F."/>
            <person name="Frankland J."/>
            <person name="Fraser A.E."/>
            <person name="Galgoczy P."/>
            <person name="Gilbert J."/>
            <person name="Gill R."/>
            <person name="Gloeckner G."/>
            <person name="Gregory S.G."/>
            <person name="Gribble S."/>
            <person name="Griffiths C."/>
            <person name="Grocock R."/>
            <person name="Gu Y."/>
            <person name="Gwilliam R."/>
            <person name="Hamilton C."/>
            <person name="Hart E.A."/>
            <person name="Hawes A."/>
            <person name="Heath P.D."/>
            <person name="Heitmann K."/>
            <person name="Hennig S."/>
            <person name="Hernandez J."/>
            <person name="Hinzmann B."/>
            <person name="Ho S."/>
            <person name="Hoffs M."/>
            <person name="Howden P.J."/>
            <person name="Huckle E.J."/>
            <person name="Hume J."/>
            <person name="Hunt P.J."/>
            <person name="Hunt A.R."/>
            <person name="Isherwood J."/>
            <person name="Jacob L."/>
            <person name="Johnson D."/>
            <person name="Jones S."/>
            <person name="de Jong P.J."/>
            <person name="Joseph S.S."/>
            <person name="Keenan S."/>
            <person name="Kelly S."/>
            <person name="Kershaw J.K."/>
            <person name="Khan Z."/>
            <person name="Kioschis P."/>
            <person name="Klages S."/>
            <person name="Knights A.J."/>
            <person name="Kosiura A."/>
            <person name="Kovar-Smith C."/>
            <person name="Laird G.K."/>
            <person name="Langford C."/>
            <person name="Lawlor S."/>
            <person name="Leversha M."/>
            <person name="Lewis L."/>
            <person name="Liu W."/>
            <person name="Lloyd C."/>
            <person name="Lloyd D.M."/>
            <person name="Loulseged H."/>
            <person name="Loveland J.E."/>
            <person name="Lovell J.D."/>
            <person name="Lozado R."/>
            <person name="Lu J."/>
            <person name="Lyne R."/>
            <person name="Ma J."/>
            <person name="Maheshwari M."/>
            <person name="Matthews L.H."/>
            <person name="McDowall J."/>
            <person name="McLaren S."/>
            <person name="McMurray A."/>
            <person name="Meidl P."/>
            <person name="Meitinger T."/>
            <person name="Milne S."/>
            <person name="Miner G."/>
            <person name="Mistry S.L."/>
            <person name="Morgan M."/>
            <person name="Morris S."/>
            <person name="Mueller I."/>
            <person name="Mullikin J.C."/>
            <person name="Nguyen N."/>
            <person name="Nordsiek G."/>
            <person name="Nyakatura G."/>
            <person name="O'dell C.N."/>
            <person name="Okwuonu G."/>
            <person name="Palmer S."/>
            <person name="Pandian R."/>
            <person name="Parker D."/>
            <person name="Parrish J."/>
            <person name="Pasternak S."/>
            <person name="Patel D."/>
            <person name="Pearce A.V."/>
            <person name="Pearson D.M."/>
            <person name="Pelan S.E."/>
            <person name="Perez L."/>
            <person name="Porter K.M."/>
            <person name="Ramsey Y."/>
            <person name="Reichwald K."/>
            <person name="Rhodes S."/>
            <person name="Ridler K.A."/>
            <person name="Schlessinger D."/>
            <person name="Schueler M.G."/>
            <person name="Sehra H.K."/>
            <person name="Shaw-Smith C."/>
            <person name="Shen H."/>
            <person name="Sheridan E.M."/>
            <person name="Shownkeen R."/>
            <person name="Skuce C.D."/>
            <person name="Smith M.L."/>
            <person name="Sotheran E.C."/>
            <person name="Steingruber H.E."/>
            <person name="Steward C.A."/>
            <person name="Storey R."/>
            <person name="Swann R.M."/>
            <person name="Swarbreck D."/>
            <person name="Tabor P.E."/>
            <person name="Taudien S."/>
            <person name="Taylor T."/>
            <person name="Teague B."/>
            <person name="Thomas K."/>
            <person name="Thorpe A."/>
            <person name="Timms K."/>
            <person name="Tracey A."/>
            <person name="Trevanion S."/>
            <person name="Tromans A.C."/>
            <person name="d'Urso M."/>
            <person name="Verduzco D."/>
            <person name="Villasana D."/>
            <person name="Waldron L."/>
            <person name="Wall M."/>
            <person name="Wang Q."/>
            <person name="Warren J."/>
            <person name="Warry G.L."/>
            <person name="Wei X."/>
            <person name="West A."/>
            <person name="Whitehead S.L."/>
            <person name="Whiteley M.N."/>
            <person name="Wilkinson J.E."/>
            <person name="Willey D.L."/>
            <person name="Williams G."/>
            <person name="Williams L."/>
            <person name="Williamson A."/>
            <person name="Williamson H."/>
            <person name="Wilming L."/>
            <person name="Woodmansey R.L."/>
            <person name="Wray P.W."/>
            <person name="Yen J."/>
            <person name="Zhang J."/>
            <person name="Zhou J."/>
            <person name="Zoghbi H."/>
            <person name="Zorilla S."/>
            <person name="Buck D."/>
            <person name="Reinhardt R."/>
            <person name="Poustka A."/>
            <person name="Rosenthal A."/>
            <person name="Lehrach H."/>
            <person name="Meindl A."/>
            <person name="Minx P.J."/>
            <person name="Hillier L.W."/>
            <person name="Willard H.F."/>
            <person name="Wilson R.K."/>
            <person name="Waterston R.H."/>
            <person name="Rice C.M."/>
            <person name="Vaudin M."/>
            <person name="Coulson A."/>
            <person name="Nelson D.L."/>
            <person name="Weinstock G."/>
            <person name="Sulston J.E."/>
            <person name="Durbin R.M."/>
            <person name="Hubbard T."/>
            <person name="Gibbs R.A."/>
            <person name="Beck S."/>
            <person name="Rogers J."/>
            <person name="Bentley D.R."/>
        </authorList>
    </citation>
    <scope>NUCLEOTIDE SEQUENCE [LARGE SCALE GENOMIC DNA]</scope>
</reference>
<gene>
    <name evidence="3" type="primary">CXorf51A</name>
    <name evidence="3" type="synonym">CXorf51</name>
</gene>